<gene>
    <name evidence="6" type="primary">BCP1B</name>
    <name evidence="6" type="synonym">MtC50697</name>
    <name evidence="7" type="ordered locus">MTR_7g086160</name>
    <name evidence="8" type="ORF">MtrunA17_Chr7g0253681</name>
</gene>
<evidence type="ECO:0000255" key="1"/>
<evidence type="ECO:0000255" key="2">
    <source>
        <dbReference type="PROSITE-ProRule" id="PRU00498"/>
    </source>
</evidence>
<evidence type="ECO:0000255" key="3">
    <source>
        <dbReference type="PROSITE-ProRule" id="PRU00818"/>
    </source>
</evidence>
<evidence type="ECO:0000269" key="4">
    <source>
    </source>
</evidence>
<evidence type="ECO:0000269" key="5">
    <source>
    </source>
</evidence>
<evidence type="ECO:0000303" key="6">
    <source>
    </source>
</evidence>
<evidence type="ECO:0000312" key="7">
    <source>
        <dbReference type="EMBL" id="KEH23538.1"/>
    </source>
</evidence>
<evidence type="ECO:0000312" key="8">
    <source>
        <dbReference type="EMBL" id="RHN47500.1"/>
    </source>
</evidence>
<sequence>MASSRVVLILSISMVLLSSVAIAATDYIVGDDKGWTVDFDYTQWAQDKVFRVGDNLVFNYDPSRHNVFKVNGTLFQSCTFPPKNEALSTGKDIIQLKTEGRKWYVCGVADHCSARQMKLVITVLAEGAPAPSPPPSSDAHSVVSSLFGVVMAIMVAIAVIFA</sequence>
<accession>A0A072U307</accession>
<organism>
    <name type="scientific">Medicago truncatula</name>
    <name type="common">Barrel medic</name>
    <name type="synonym">Medicago tribuloides</name>
    <dbReference type="NCBI Taxonomy" id="3880"/>
    <lineage>
        <taxon>Eukaryota</taxon>
        <taxon>Viridiplantae</taxon>
        <taxon>Streptophyta</taxon>
        <taxon>Embryophyta</taxon>
        <taxon>Tracheophyta</taxon>
        <taxon>Spermatophyta</taxon>
        <taxon>Magnoliopsida</taxon>
        <taxon>eudicotyledons</taxon>
        <taxon>Gunneridae</taxon>
        <taxon>Pentapetalae</taxon>
        <taxon>rosids</taxon>
        <taxon>fabids</taxon>
        <taxon>Fabales</taxon>
        <taxon>Fabaceae</taxon>
        <taxon>Papilionoideae</taxon>
        <taxon>50 kb inversion clade</taxon>
        <taxon>NPAAA clade</taxon>
        <taxon>Hologalegina</taxon>
        <taxon>IRL clade</taxon>
        <taxon>Trifolieae</taxon>
        <taxon>Medicago</taxon>
    </lineage>
</organism>
<keyword id="KW-0186">Copper</keyword>
<keyword id="KW-1015">Disulfide bond</keyword>
<keyword id="KW-0249">Electron transport</keyword>
<keyword id="KW-0325">Glycoprotein</keyword>
<keyword id="KW-0472">Membrane</keyword>
<keyword id="KW-0479">Metal-binding</keyword>
<keyword id="KW-1185">Reference proteome</keyword>
<keyword id="KW-0732">Signal</keyword>
<keyword id="KW-0812">Transmembrane</keyword>
<keyword id="KW-1133">Transmembrane helix</keyword>
<keyword id="KW-0813">Transport</keyword>
<dbReference type="EMBL" id="FN600697">
    <property type="status" value="NOT_ANNOTATED_CDS"/>
    <property type="molecule type" value="mRNA"/>
</dbReference>
<dbReference type="EMBL" id="CM001223">
    <property type="protein sequence ID" value="KEH23538.1"/>
    <property type="molecule type" value="Genomic_DNA"/>
</dbReference>
<dbReference type="EMBL" id="PSQE01000007">
    <property type="protein sequence ID" value="RHN47500.1"/>
    <property type="molecule type" value="Genomic_DNA"/>
</dbReference>
<dbReference type="RefSeq" id="XP_013449510.1">
    <property type="nucleotide sequence ID" value="XM_013594056.1"/>
</dbReference>
<dbReference type="SMR" id="A0A072U307"/>
<dbReference type="STRING" id="3880.A0A072U307"/>
<dbReference type="GlyCosmos" id="A0A072U307">
    <property type="glycosylation" value="1 site, No reported glycans"/>
</dbReference>
<dbReference type="EnsemblPlants" id="rna42111">
    <property type="protein sequence ID" value="RHN47500.1"/>
    <property type="gene ID" value="gene42111"/>
</dbReference>
<dbReference type="GeneID" id="25498990"/>
<dbReference type="Gramene" id="rna42111">
    <property type="protein sequence ID" value="RHN47500.1"/>
    <property type="gene ID" value="gene42111"/>
</dbReference>
<dbReference type="KEGG" id="mtr:25498990"/>
<dbReference type="HOGENOM" id="CLU_058719_4_0_1"/>
<dbReference type="OrthoDB" id="687943at2759"/>
<dbReference type="Proteomes" id="UP000002051">
    <property type="component" value="Chomosome 7"/>
</dbReference>
<dbReference type="Proteomes" id="UP000265566">
    <property type="component" value="Chromosome 7"/>
</dbReference>
<dbReference type="GO" id="GO:0005886">
    <property type="term" value="C:plasma membrane"/>
    <property type="evidence" value="ECO:0000318"/>
    <property type="project" value="GO_Central"/>
</dbReference>
<dbReference type="GO" id="GO:0009055">
    <property type="term" value="F:electron transfer activity"/>
    <property type="evidence" value="ECO:0007669"/>
    <property type="project" value="InterPro"/>
</dbReference>
<dbReference type="GO" id="GO:0046872">
    <property type="term" value="F:metal ion binding"/>
    <property type="evidence" value="ECO:0007669"/>
    <property type="project" value="UniProtKB-KW"/>
</dbReference>
<dbReference type="GO" id="GO:0009610">
    <property type="term" value="P:response to symbiotic fungus"/>
    <property type="evidence" value="ECO:0000270"/>
    <property type="project" value="UniProtKB"/>
</dbReference>
<dbReference type="CDD" id="cd04216">
    <property type="entry name" value="Phytocyanin"/>
    <property type="match status" value="1"/>
</dbReference>
<dbReference type="FunFam" id="2.60.40.420:FF:000067">
    <property type="entry name" value="Cupredoxin superfamily protein"/>
    <property type="match status" value="1"/>
</dbReference>
<dbReference type="Gene3D" id="2.60.40.420">
    <property type="entry name" value="Cupredoxins - blue copper proteins"/>
    <property type="match status" value="1"/>
</dbReference>
<dbReference type="InterPro" id="IPR008972">
    <property type="entry name" value="Cupredoxin"/>
</dbReference>
<dbReference type="InterPro" id="IPR039391">
    <property type="entry name" value="Phytocyanin-like"/>
</dbReference>
<dbReference type="InterPro" id="IPR003245">
    <property type="entry name" value="Phytocyanin_dom"/>
</dbReference>
<dbReference type="PANTHER" id="PTHR33021">
    <property type="entry name" value="BLUE COPPER PROTEIN"/>
    <property type="match status" value="1"/>
</dbReference>
<dbReference type="PANTHER" id="PTHR33021:SF549">
    <property type="entry name" value="BLUE COPPER PROTEIN 1B"/>
    <property type="match status" value="1"/>
</dbReference>
<dbReference type="Pfam" id="PF02298">
    <property type="entry name" value="Cu_bind_like"/>
    <property type="match status" value="1"/>
</dbReference>
<dbReference type="SUPFAM" id="SSF49503">
    <property type="entry name" value="Cupredoxins"/>
    <property type="match status" value="1"/>
</dbReference>
<dbReference type="PROSITE" id="PS51485">
    <property type="entry name" value="PHYTOCYANIN"/>
    <property type="match status" value="1"/>
</dbReference>
<comment type="subcellular location">
    <subcellularLocation>
        <location evidence="1">Membrane</location>
        <topology evidence="1">Single-pass type I membrane protein</topology>
    </subcellularLocation>
</comment>
<comment type="induction">
    <text evidence="4 5">Accumulates in roots, in a RAM1-dependent manner, during colonization by arbuscular mycorrhizal (AM) fungi (e.g. Glomus versiforme and G.intraradices); the expression level correlates tightly with AM development.</text>
</comment>
<reference key="1">
    <citation type="journal article" date="2010" name="Mol. Plant Microbe Interact.">
        <title>Transcription of two blue copper-binding protein isogenes is highly correlated with arbuscular mycorrhizal development in Medicago truncatula.</title>
        <authorList>
            <person name="Paradi I."/>
            <person name="van Tuinen D."/>
            <person name="Morandi D."/>
            <person name="Ochatt S."/>
            <person name="Robert F."/>
            <person name="Jacas L."/>
            <person name="Dumas-Gaudot E."/>
        </authorList>
    </citation>
    <scope>NUCLEOTIDE SEQUENCE [MRNA]</scope>
    <scope>INDUCTION BY GLOMUS INTRARADICES</scope>
    <source>
        <strain>cv. Jemalong J5</strain>
        <tissue>Root</tissue>
    </source>
</reference>
<reference key="2">
    <citation type="journal article" date="2011" name="Nature">
        <title>The Medicago genome provides insight into the evolution of rhizobial symbioses.</title>
        <authorList>
            <person name="Young N.D."/>
            <person name="Debelle F."/>
            <person name="Oldroyd G.E.D."/>
            <person name="Geurts R."/>
            <person name="Cannon S.B."/>
            <person name="Udvardi M.K."/>
            <person name="Benedito V.A."/>
            <person name="Mayer K.F.X."/>
            <person name="Gouzy J."/>
            <person name="Schoof H."/>
            <person name="Van de Peer Y."/>
            <person name="Proost S."/>
            <person name="Cook D.R."/>
            <person name="Meyers B.C."/>
            <person name="Spannagl M."/>
            <person name="Cheung F."/>
            <person name="De Mita S."/>
            <person name="Krishnakumar V."/>
            <person name="Gundlach H."/>
            <person name="Zhou S."/>
            <person name="Mudge J."/>
            <person name="Bharti A.K."/>
            <person name="Murray J.D."/>
            <person name="Naoumkina M.A."/>
            <person name="Rosen B."/>
            <person name="Silverstein K.A.T."/>
            <person name="Tang H."/>
            <person name="Rombauts S."/>
            <person name="Zhao P.X."/>
            <person name="Zhou P."/>
            <person name="Barbe V."/>
            <person name="Bardou P."/>
            <person name="Bechner M."/>
            <person name="Bellec A."/>
            <person name="Berger A."/>
            <person name="Berges H."/>
            <person name="Bidwell S."/>
            <person name="Bisseling T."/>
            <person name="Choisne N."/>
            <person name="Couloux A."/>
            <person name="Denny R."/>
            <person name="Deshpande S."/>
            <person name="Dai X."/>
            <person name="Doyle J.J."/>
            <person name="Dudez A.-M."/>
            <person name="Farmer A.D."/>
            <person name="Fouteau S."/>
            <person name="Franken C."/>
            <person name="Gibelin C."/>
            <person name="Gish J."/>
            <person name="Goldstein S."/>
            <person name="Gonzalez A.J."/>
            <person name="Green P.J."/>
            <person name="Hallab A."/>
            <person name="Hartog M."/>
            <person name="Hua A."/>
            <person name="Humphray S.J."/>
            <person name="Jeong D.-H."/>
            <person name="Jing Y."/>
            <person name="Jocker A."/>
            <person name="Kenton S.M."/>
            <person name="Kim D.-J."/>
            <person name="Klee K."/>
            <person name="Lai H."/>
            <person name="Lang C."/>
            <person name="Lin S."/>
            <person name="Macmil S.L."/>
            <person name="Magdelenat G."/>
            <person name="Matthews L."/>
            <person name="McCorrison J."/>
            <person name="Monaghan E.L."/>
            <person name="Mun J.-H."/>
            <person name="Najar F.Z."/>
            <person name="Nicholson C."/>
            <person name="Noirot C."/>
            <person name="O'Bleness M."/>
            <person name="Paule C.R."/>
            <person name="Poulain J."/>
            <person name="Prion F."/>
            <person name="Qin B."/>
            <person name="Qu C."/>
            <person name="Retzel E.F."/>
            <person name="Riddle C."/>
            <person name="Sallet E."/>
            <person name="Samain S."/>
            <person name="Samson N."/>
            <person name="Sanders I."/>
            <person name="Saurat O."/>
            <person name="Scarpelli C."/>
            <person name="Schiex T."/>
            <person name="Segurens B."/>
            <person name="Severin A.J."/>
            <person name="Sherrier D.J."/>
            <person name="Shi R."/>
            <person name="Sims S."/>
            <person name="Singer S.R."/>
            <person name="Sinharoy S."/>
            <person name="Sterck L."/>
            <person name="Viollet A."/>
            <person name="Wang B.-B."/>
            <person name="Wang K."/>
            <person name="Wang M."/>
            <person name="Wang X."/>
            <person name="Warfsmann J."/>
            <person name="Weissenbach J."/>
            <person name="White D.D."/>
            <person name="White J.D."/>
            <person name="Wiley G.B."/>
            <person name="Wincker P."/>
            <person name="Xing Y."/>
            <person name="Yang L."/>
            <person name="Yao Z."/>
            <person name="Ying F."/>
            <person name="Zhai J."/>
            <person name="Zhou L."/>
            <person name="Zuber A."/>
            <person name="Denarie J."/>
            <person name="Dixon R.A."/>
            <person name="May G.D."/>
            <person name="Schwartz D.C."/>
            <person name="Rogers J."/>
            <person name="Quetier F."/>
            <person name="Town C.D."/>
            <person name="Roe B.A."/>
        </authorList>
    </citation>
    <scope>NUCLEOTIDE SEQUENCE [LARGE SCALE GENOMIC DNA]</scope>
    <source>
        <strain>cv. Jemalong A17</strain>
    </source>
</reference>
<reference key="3">
    <citation type="journal article" date="2014" name="BMC Genomics">
        <title>An improved genome release (version Mt4.0) for the model legume Medicago truncatula.</title>
        <authorList>
            <person name="Tang H."/>
            <person name="Krishnakumar V."/>
            <person name="Bidwell S."/>
            <person name="Rosen B."/>
            <person name="Chan A."/>
            <person name="Zhou S."/>
            <person name="Gentzbittel L."/>
            <person name="Childs K.L."/>
            <person name="Yandell M."/>
            <person name="Gundlach H."/>
            <person name="Mayer K.F."/>
            <person name="Schwartz D.C."/>
            <person name="Town C.D."/>
        </authorList>
    </citation>
    <scope>GENOME REANNOTATION</scope>
    <source>
        <strain>cv. Jemalong A17</strain>
    </source>
</reference>
<reference key="4">
    <citation type="journal article" date="2018" name="Nat. Plants">
        <title>Whole-genome landscape of Medicago truncatula symbiotic genes.</title>
        <authorList>
            <person name="Pecrix Y."/>
            <person name="Staton S.E."/>
            <person name="Sallet E."/>
            <person name="Lelandais-Briere C."/>
            <person name="Moreau S."/>
            <person name="Carrere S."/>
            <person name="Blein T."/>
            <person name="Jardinaud M.F."/>
            <person name="Latrasse D."/>
            <person name="Zouine M."/>
            <person name="Zahm M."/>
            <person name="Kreplak J."/>
            <person name="Mayjonade B."/>
            <person name="Satge C."/>
            <person name="Perez M."/>
            <person name="Cauet S."/>
            <person name="Marande W."/>
            <person name="Chantry-Darmon C."/>
            <person name="Lopez-Roques C."/>
            <person name="Bouchez O."/>
            <person name="Berard A."/>
            <person name="Debelle F."/>
            <person name="Munos S."/>
            <person name="Bendahmane A."/>
            <person name="Berges H."/>
            <person name="Niebel A."/>
            <person name="Buitink J."/>
            <person name="Frugier F."/>
            <person name="Benhamed M."/>
            <person name="Crespi M."/>
            <person name="Gouzy J."/>
            <person name="Gamas P."/>
        </authorList>
    </citation>
    <scope>NUCLEOTIDE SEQUENCE [LARGE SCALE GENOMIC DNA]</scope>
    <source>
        <strain>cv. Jemalong A17</strain>
    </source>
</reference>
<reference key="5">
    <citation type="journal article" date="2015" name="Plant Physiol.">
        <title>Hyphal branching during arbuscule development requires reduced arbuscular mycorrhiza1.</title>
        <authorList>
            <person name="Park H.-J."/>
            <person name="Floss D.S."/>
            <person name="Levesque-Tremblay V."/>
            <person name="Bravo A."/>
            <person name="Harrison M.J."/>
        </authorList>
    </citation>
    <scope>INDUCTION BY RAM1 AND GLOMUS VERSIFORME</scope>
</reference>
<protein>
    <recommendedName>
        <fullName evidence="6">Blue copper protein 1b</fullName>
        <shortName evidence="6">MtBcp1b</shortName>
    </recommendedName>
</protein>
<proteinExistence type="evidence at transcript level"/>
<name>BCP1B_MEDTR</name>
<feature type="signal peptide" evidence="1">
    <location>
        <begin position="1"/>
        <end position="23"/>
    </location>
</feature>
<feature type="chain" id="PRO_5014499234" description="Blue copper protein 1b">
    <location>
        <begin position="24"/>
        <end position="162"/>
    </location>
</feature>
<feature type="transmembrane region" description="Helical" evidence="1">
    <location>
        <begin position="142"/>
        <end position="162"/>
    </location>
</feature>
<feature type="domain" description="Phytocyanin" evidence="3">
    <location>
        <begin position="25"/>
        <end position="125"/>
    </location>
</feature>
<feature type="binding site" evidence="3">
    <location>
        <position position="65"/>
    </location>
    <ligand>
        <name>Cu cation</name>
        <dbReference type="ChEBI" id="CHEBI:23378"/>
    </ligand>
</feature>
<feature type="binding site" evidence="3">
    <location>
        <position position="106"/>
    </location>
    <ligand>
        <name>Cu cation</name>
        <dbReference type="ChEBI" id="CHEBI:23378"/>
    </ligand>
</feature>
<feature type="binding site" evidence="3">
    <location>
        <position position="111"/>
    </location>
    <ligand>
        <name>Cu cation</name>
        <dbReference type="ChEBI" id="CHEBI:23378"/>
    </ligand>
</feature>
<feature type="binding site" evidence="3">
    <location>
        <position position="117"/>
    </location>
    <ligand>
        <name>Cu cation</name>
        <dbReference type="ChEBI" id="CHEBI:23378"/>
    </ligand>
</feature>
<feature type="glycosylation site" description="N-linked (GlcNAc...) asparagine" evidence="2">
    <location>
        <position position="71"/>
    </location>
</feature>
<feature type="disulfide bond" evidence="3">
    <location>
        <begin position="78"/>
        <end position="112"/>
    </location>
</feature>